<reference key="1">
    <citation type="journal article" date="2003" name="Nature">
        <title>The genome sequence of the filamentous fungus Neurospora crassa.</title>
        <authorList>
            <person name="Galagan J.E."/>
            <person name="Calvo S.E."/>
            <person name="Borkovich K.A."/>
            <person name="Selker E.U."/>
            <person name="Read N.D."/>
            <person name="Jaffe D.B."/>
            <person name="FitzHugh W."/>
            <person name="Ma L.-J."/>
            <person name="Smirnov S."/>
            <person name="Purcell S."/>
            <person name="Rehman B."/>
            <person name="Elkins T."/>
            <person name="Engels R."/>
            <person name="Wang S."/>
            <person name="Nielsen C.B."/>
            <person name="Butler J."/>
            <person name="Endrizzi M."/>
            <person name="Qui D."/>
            <person name="Ianakiev P."/>
            <person name="Bell-Pedersen D."/>
            <person name="Nelson M.A."/>
            <person name="Werner-Washburne M."/>
            <person name="Selitrennikoff C.P."/>
            <person name="Kinsey J.A."/>
            <person name="Braun E.L."/>
            <person name="Zelter A."/>
            <person name="Schulte U."/>
            <person name="Kothe G.O."/>
            <person name="Jedd G."/>
            <person name="Mewes H.-W."/>
            <person name="Staben C."/>
            <person name="Marcotte E."/>
            <person name="Greenberg D."/>
            <person name="Roy A."/>
            <person name="Foley K."/>
            <person name="Naylor J."/>
            <person name="Stange-Thomann N."/>
            <person name="Barrett R."/>
            <person name="Gnerre S."/>
            <person name="Kamal M."/>
            <person name="Kamvysselis M."/>
            <person name="Mauceli E.W."/>
            <person name="Bielke C."/>
            <person name="Rudd S."/>
            <person name="Frishman D."/>
            <person name="Krystofova S."/>
            <person name="Rasmussen C."/>
            <person name="Metzenberg R.L."/>
            <person name="Perkins D.D."/>
            <person name="Kroken S."/>
            <person name="Cogoni C."/>
            <person name="Macino G."/>
            <person name="Catcheside D.E.A."/>
            <person name="Li W."/>
            <person name="Pratt R.J."/>
            <person name="Osmani S.A."/>
            <person name="DeSouza C.P.C."/>
            <person name="Glass N.L."/>
            <person name="Orbach M.J."/>
            <person name="Berglund J.A."/>
            <person name="Voelker R."/>
            <person name="Yarden O."/>
            <person name="Plamann M."/>
            <person name="Seiler S."/>
            <person name="Dunlap J.C."/>
            <person name="Radford A."/>
            <person name="Aramayo R."/>
            <person name="Natvig D.O."/>
            <person name="Alex L.A."/>
            <person name="Mannhaupt G."/>
            <person name="Ebbole D.J."/>
            <person name="Freitag M."/>
            <person name="Paulsen I."/>
            <person name="Sachs M.S."/>
            <person name="Lander E.S."/>
            <person name="Nusbaum C."/>
            <person name="Birren B.W."/>
        </authorList>
    </citation>
    <scope>NUCLEOTIDE SEQUENCE [LARGE SCALE GENOMIC DNA]</scope>
    <source>
        <strain>ATCC 24698 / 74-OR23-1A / CBS 708.71 / DSM 1257 / FGSC 987</strain>
    </source>
</reference>
<reference key="2">
    <citation type="journal article" date="2005" name="Genes Dev.">
        <title>The COP9 signalosome regulates the Neurospora circadian clock by controlling the stability of the SCFFWD-1 complex.</title>
        <authorList>
            <person name="He Q."/>
            <person name="Cheng P."/>
            <person name="He Q."/>
            <person name="Liu Y."/>
        </authorList>
    </citation>
    <scope>IDENTIFICATION BY MASS SPECTROMETRY</scope>
    <scope>IDENTIFICATION IN THE COP9 SIGNALOSOME COMPLEX</scope>
    <scope>FUNCTION OF THE COP9 SIGNALOSOME COMPLEX</scope>
</reference>
<dbReference type="EMBL" id="CM002239">
    <property type="protein sequence ID" value="EAA32604.1"/>
    <property type="molecule type" value="Genomic_DNA"/>
</dbReference>
<dbReference type="RefSeq" id="XP_961840.1">
    <property type="nucleotide sequence ID" value="XM_956747.2"/>
</dbReference>
<dbReference type="STRING" id="367110.Q7S8C8"/>
<dbReference type="PaxDb" id="5141-EFNCRP00000007086"/>
<dbReference type="EnsemblFungi" id="EAA32604">
    <property type="protein sequence ID" value="EAA32604"/>
    <property type="gene ID" value="NCU07019"/>
</dbReference>
<dbReference type="GeneID" id="3877988"/>
<dbReference type="KEGG" id="ncr:NCU07019"/>
<dbReference type="VEuPathDB" id="FungiDB:NCU07019"/>
<dbReference type="HOGENOM" id="CLU_027018_2_0_1"/>
<dbReference type="InParanoid" id="Q7S8C8"/>
<dbReference type="OMA" id="LVGWWST"/>
<dbReference type="OrthoDB" id="1378at2759"/>
<dbReference type="Proteomes" id="UP000001805">
    <property type="component" value="Chromosome 4, Linkage Group IV"/>
</dbReference>
<dbReference type="GO" id="GO:0008180">
    <property type="term" value="C:COP9 signalosome"/>
    <property type="evidence" value="ECO:0000318"/>
    <property type="project" value="GO_Central"/>
</dbReference>
<dbReference type="GO" id="GO:0005737">
    <property type="term" value="C:cytoplasm"/>
    <property type="evidence" value="ECO:0007669"/>
    <property type="project" value="UniProtKB-SubCell"/>
</dbReference>
<dbReference type="GO" id="GO:0008237">
    <property type="term" value="F:metallopeptidase activity"/>
    <property type="evidence" value="ECO:0007669"/>
    <property type="project" value="InterPro"/>
</dbReference>
<dbReference type="GO" id="GO:0000338">
    <property type="term" value="P:protein deneddylation"/>
    <property type="evidence" value="ECO:0007669"/>
    <property type="project" value="InterPro"/>
</dbReference>
<dbReference type="CDD" id="cd08063">
    <property type="entry name" value="MPN_CSN6"/>
    <property type="match status" value="1"/>
</dbReference>
<dbReference type="FunFam" id="3.40.140.10:FF:000055">
    <property type="entry name" value="COP9 signalosome complex subunit 6"/>
    <property type="match status" value="1"/>
</dbReference>
<dbReference type="Gene3D" id="3.40.140.10">
    <property type="entry name" value="Cytidine Deaminase, domain 2"/>
    <property type="match status" value="1"/>
</dbReference>
<dbReference type="InterPro" id="IPR000555">
    <property type="entry name" value="JAMM/MPN+_dom"/>
</dbReference>
<dbReference type="InterPro" id="IPR037518">
    <property type="entry name" value="MPN"/>
</dbReference>
<dbReference type="InterPro" id="IPR033859">
    <property type="entry name" value="MPN_CSN6"/>
</dbReference>
<dbReference type="PANTHER" id="PTHR10540:SF8">
    <property type="entry name" value="COP9 SIGNALOSOME COMPLEX SUBUNIT 6"/>
    <property type="match status" value="1"/>
</dbReference>
<dbReference type="PANTHER" id="PTHR10540">
    <property type="entry name" value="EUKARYOTIC TRANSLATION INITIATION FACTOR 3 SUBUNIT F-RELATED"/>
    <property type="match status" value="1"/>
</dbReference>
<dbReference type="Pfam" id="PF01398">
    <property type="entry name" value="JAB"/>
    <property type="match status" value="1"/>
</dbReference>
<dbReference type="PROSITE" id="PS50249">
    <property type="entry name" value="MPN"/>
    <property type="match status" value="1"/>
</dbReference>
<gene>
    <name type="primary">csn-6</name>
    <name type="ORF">NCU07019</name>
</gene>
<keyword id="KW-0963">Cytoplasm</keyword>
<keyword id="KW-0539">Nucleus</keyword>
<keyword id="KW-1185">Reference proteome</keyword>
<keyword id="KW-0736">Signalosome</keyword>
<accession>Q7S8C8</accession>
<organism>
    <name type="scientific">Neurospora crassa (strain ATCC 24698 / 74-OR23-1A / CBS 708.71 / DSM 1257 / FGSC 987)</name>
    <dbReference type="NCBI Taxonomy" id="367110"/>
    <lineage>
        <taxon>Eukaryota</taxon>
        <taxon>Fungi</taxon>
        <taxon>Dikarya</taxon>
        <taxon>Ascomycota</taxon>
        <taxon>Pezizomycotina</taxon>
        <taxon>Sordariomycetes</taxon>
        <taxon>Sordariomycetidae</taxon>
        <taxon>Sordariales</taxon>
        <taxon>Sordariaceae</taxon>
        <taxon>Neurospora</taxon>
    </lineage>
</organism>
<evidence type="ECO:0000250" key="1"/>
<evidence type="ECO:0000255" key="2">
    <source>
        <dbReference type="PROSITE-ProRule" id="PRU01182"/>
    </source>
</evidence>
<evidence type="ECO:0000256" key="3">
    <source>
        <dbReference type="SAM" id="MobiDB-lite"/>
    </source>
</evidence>
<evidence type="ECO:0000269" key="4">
    <source>
    </source>
</evidence>
<evidence type="ECO:0000305" key="5"/>
<comment type="function">
    <text evidence="1 4">Component of the COP9 signalosome (CSN) complex that acts as an regulator of the ubiquitin (Ubl) conjugation pathway by mediating the deneddylation of the cullin subunit of SCF-type E3 ubiquitin-protein ligase complexes (By similarity). The CSN complex is involved in the regulation of the circadian clock through its control of the stability of the SCF(FWD1) complex.</text>
</comment>
<comment type="subunit">
    <text evidence="4">Component of the COP9 signalosome (CSN) complex.</text>
</comment>
<comment type="subcellular location">
    <subcellularLocation>
        <location evidence="1">Cytoplasm</location>
    </subcellularLocation>
    <subcellularLocation>
        <location evidence="1">Nucleus</location>
    </subcellularLocation>
</comment>
<comment type="similarity">
    <text evidence="5">Belongs to the peptidase M67A family. CSN6 subfamily.</text>
</comment>
<name>CSN6_NEUCR</name>
<proteinExistence type="evidence at protein level"/>
<sequence>MAAATVNPLMSTLKSDSSLQVALHPLPILEISDYITRSYLRGYKGAIVGALIGQQNGRQITIEHSFSVKTEHTGQNYKVDSEWFTARLDQMKAVHKDRALDFVGWYTLVPKSGPTDAHLPIHSYFYSQNESAVLLGFHIHEILNPVAGDPLPLTIYESNLEIVDGTEASTVEVEGEDREMKDVTAEPSRSIKFRELPYTTETGEAEMIALEFVREGGSANVTTTATNITATEDEGSDKPLMKKVVDTNKGSKRRAVSSDDAAAEAPTTSSAAKGTATDKNRDANLTKAELDYMSALQAKYNAVQMMKKRLDTVISYLQRLPPDYLSSGDASSQQQQQQQQQQQTEGLDQPQYTVPSNKILRQIQALVTNVQLVMSNSTSGQGQGQGERDTDLGALEKELLKETNDVKLVELIADLMSSVKDMKEVGKKFHVVETAKNSKRREQASHGGGERFNPHHPYPGGGGGSSMMREHAGLVGEGSASGSGGSGPAGDLARFDH</sequence>
<feature type="chain" id="PRO_0000314735" description="COP9 signalosome complex subunit 6">
    <location>
        <begin position="1"/>
        <end position="497"/>
    </location>
</feature>
<feature type="domain" description="MPN" evidence="2">
    <location>
        <begin position="21"/>
        <end position="162"/>
    </location>
</feature>
<feature type="region of interest" description="Disordered" evidence="3">
    <location>
        <begin position="230"/>
        <end position="282"/>
    </location>
</feature>
<feature type="region of interest" description="Disordered" evidence="3">
    <location>
        <begin position="324"/>
        <end position="350"/>
    </location>
</feature>
<feature type="region of interest" description="Disordered" evidence="3">
    <location>
        <begin position="435"/>
        <end position="497"/>
    </location>
</feature>
<feature type="compositionally biased region" description="Basic and acidic residues" evidence="3">
    <location>
        <begin position="236"/>
        <end position="246"/>
    </location>
</feature>
<feature type="compositionally biased region" description="Low complexity" evidence="3">
    <location>
        <begin position="258"/>
        <end position="272"/>
    </location>
</feature>
<feature type="compositionally biased region" description="Low complexity" evidence="3">
    <location>
        <begin position="333"/>
        <end position="343"/>
    </location>
</feature>
<feature type="compositionally biased region" description="Basic and acidic residues" evidence="3">
    <location>
        <begin position="440"/>
        <end position="453"/>
    </location>
</feature>
<feature type="compositionally biased region" description="Gly residues" evidence="3">
    <location>
        <begin position="475"/>
        <end position="488"/>
    </location>
</feature>
<protein>
    <recommendedName>
        <fullName>COP9 signalosome complex subunit 6</fullName>
        <shortName>Signalosome subunit 6</shortName>
    </recommendedName>
</protein>